<keyword id="KW-0067">ATP-binding</keyword>
<keyword id="KW-0963">Cytoplasm</keyword>
<keyword id="KW-0418">Kinase</keyword>
<keyword id="KW-0460">Magnesium</keyword>
<keyword id="KW-0479">Metal-binding</keyword>
<keyword id="KW-0546">Nucleotide metabolism</keyword>
<keyword id="KW-0547">Nucleotide-binding</keyword>
<keyword id="KW-0597">Phosphoprotein</keyword>
<keyword id="KW-0808">Transferase</keyword>
<gene>
    <name evidence="1" type="primary">ndk</name>
    <name type="ordered locus">FTF0373c</name>
</gene>
<sequence length="140" mass="15527">MTKQRTLSIIKPDAVEKNVIGEIYSRFEKAGLRIIAAKMKHLSKAEAERFYAVHKDRPFFSALVEFMISGPVMIQVLEGENAIAKNRELMGATNPKEAKAGTIRADFADSIDANAVHGSDAEDTAAQEIRYFFSDTEIFG</sequence>
<name>NDK_FRAT1</name>
<reference key="1">
    <citation type="journal article" date="2007" name="PLoS ONE">
        <title>Genome sequencing shows that European isolates of Francisella tularensis subspecies tularensis are almost identical to US laboratory strain Schu S4.</title>
        <authorList>
            <person name="Chaudhuri R.R."/>
            <person name="Ren C.-P."/>
            <person name="Desmond L."/>
            <person name="Vincent G.A."/>
            <person name="Silman N.J."/>
            <person name="Brehm J.K."/>
            <person name="Elmore M.J."/>
            <person name="Hudson M.J."/>
            <person name="Forsman M."/>
            <person name="Isherwood K.E."/>
            <person name="Gurycova D."/>
            <person name="Minton N.P."/>
            <person name="Titball R.W."/>
            <person name="Pallen M.J."/>
            <person name="Vipond R."/>
        </authorList>
    </citation>
    <scope>NUCLEOTIDE SEQUENCE [LARGE SCALE GENOMIC DNA]</scope>
    <source>
        <strain>FSC 198</strain>
    </source>
</reference>
<proteinExistence type="inferred from homology"/>
<evidence type="ECO:0000255" key="1">
    <source>
        <dbReference type="HAMAP-Rule" id="MF_00451"/>
    </source>
</evidence>
<feature type="chain" id="PRO_0000267780" description="Nucleoside diphosphate kinase">
    <location>
        <begin position="1"/>
        <end position="140"/>
    </location>
</feature>
<feature type="active site" description="Pros-phosphohistidine intermediate" evidence="1">
    <location>
        <position position="117"/>
    </location>
</feature>
<feature type="binding site" evidence="1">
    <location>
        <position position="11"/>
    </location>
    <ligand>
        <name>ATP</name>
        <dbReference type="ChEBI" id="CHEBI:30616"/>
    </ligand>
</feature>
<feature type="binding site" evidence="1">
    <location>
        <position position="59"/>
    </location>
    <ligand>
        <name>ATP</name>
        <dbReference type="ChEBI" id="CHEBI:30616"/>
    </ligand>
</feature>
<feature type="binding site" evidence="1">
    <location>
        <position position="87"/>
    </location>
    <ligand>
        <name>ATP</name>
        <dbReference type="ChEBI" id="CHEBI:30616"/>
    </ligand>
</feature>
<feature type="binding site" evidence="1">
    <location>
        <position position="93"/>
    </location>
    <ligand>
        <name>ATP</name>
        <dbReference type="ChEBI" id="CHEBI:30616"/>
    </ligand>
</feature>
<feature type="binding site" evidence="1">
    <location>
        <position position="104"/>
    </location>
    <ligand>
        <name>ATP</name>
        <dbReference type="ChEBI" id="CHEBI:30616"/>
    </ligand>
</feature>
<feature type="binding site" evidence="1">
    <location>
        <position position="114"/>
    </location>
    <ligand>
        <name>ATP</name>
        <dbReference type="ChEBI" id="CHEBI:30616"/>
    </ligand>
</feature>
<dbReference type="EC" id="2.7.4.6" evidence="1"/>
<dbReference type="EMBL" id="AM286280">
    <property type="protein sequence ID" value="CAL08389.1"/>
    <property type="molecule type" value="Genomic_DNA"/>
</dbReference>
<dbReference type="RefSeq" id="WP_003020029.1">
    <property type="nucleotide sequence ID" value="NC_008245.1"/>
</dbReference>
<dbReference type="SMR" id="Q14J74"/>
<dbReference type="KEGG" id="ftf:FTF0373c"/>
<dbReference type="HOGENOM" id="CLU_060216_8_1_6"/>
<dbReference type="GO" id="GO:0005737">
    <property type="term" value="C:cytoplasm"/>
    <property type="evidence" value="ECO:0007669"/>
    <property type="project" value="UniProtKB-SubCell"/>
</dbReference>
<dbReference type="GO" id="GO:0005524">
    <property type="term" value="F:ATP binding"/>
    <property type="evidence" value="ECO:0007669"/>
    <property type="project" value="UniProtKB-UniRule"/>
</dbReference>
<dbReference type="GO" id="GO:0046872">
    <property type="term" value="F:metal ion binding"/>
    <property type="evidence" value="ECO:0007669"/>
    <property type="project" value="UniProtKB-KW"/>
</dbReference>
<dbReference type="GO" id="GO:0004550">
    <property type="term" value="F:nucleoside diphosphate kinase activity"/>
    <property type="evidence" value="ECO:0007669"/>
    <property type="project" value="UniProtKB-UniRule"/>
</dbReference>
<dbReference type="GO" id="GO:0006241">
    <property type="term" value="P:CTP biosynthetic process"/>
    <property type="evidence" value="ECO:0007669"/>
    <property type="project" value="UniProtKB-UniRule"/>
</dbReference>
<dbReference type="GO" id="GO:0006183">
    <property type="term" value="P:GTP biosynthetic process"/>
    <property type="evidence" value="ECO:0007669"/>
    <property type="project" value="UniProtKB-UniRule"/>
</dbReference>
<dbReference type="GO" id="GO:0006228">
    <property type="term" value="P:UTP biosynthetic process"/>
    <property type="evidence" value="ECO:0007669"/>
    <property type="project" value="UniProtKB-UniRule"/>
</dbReference>
<dbReference type="CDD" id="cd04413">
    <property type="entry name" value="NDPk_I"/>
    <property type="match status" value="1"/>
</dbReference>
<dbReference type="FunFam" id="3.30.70.141:FF:000001">
    <property type="entry name" value="Nucleoside diphosphate kinase"/>
    <property type="match status" value="1"/>
</dbReference>
<dbReference type="Gene3D" id="3.30.70.141">
    <property type="entry name" value="Nucleoside diphosphate kinase-like domain"/>
    <property type="match status" value="1"/>
</dbReference>
<dbReference type="HAMAP" id="MF_00451">
    <property type="entry name" value="NDP_kinase"/>
    <property type="match status" value="1"/>
</dbReference>
<dbReference type="InterPro" id="IPR034907">
    <property type="entry name" value="NDK-like_dom"/>
</dbReference>
<dbReference type="InterPro" id="IPR036850">
    <property type="entry name" value="NDK-like_dom_sf"/>
</dbReference>
<dbReference type="InterPro" id="IPR001564">
    <property type="entry name" value="Nucleoside_diP_kinase"/>
</dbReference>
<dbReference type="InterPro" id="IPR023005">
    <property type="entry name" value="Nucleoside_diP_kinase_AS"/>
</dbReference>
<dbReference type="NCBIfam" id="NF001908">
    <property type="entry name" value="PRK00668.1"/>
    <property type="match status" value="1"/>
</dbReference>
<dbReference type="PANTHER" id="PTHR46161">
    <property type="entry name" value="NUCLEOSIDE DIPHOSPHATE KINASE"/>
    <property type="match status" value="1"/>
</dbReference>
<dbReference type="PANTHER" id="PTHR46161:SF3">
    <property type="entry name" value="NUCLEOSIDE DIPHOSPHATE KINASE DDB_G0292928-RELATED"/>
    <property type="match status" value="1"/>
</dbReference>
<dbReference type="Pfam" id="PF00334">
    <property type="entry name" value="NDK"/>
    <property type="match status" value="1"/>
</dbReference>
<dbReference type="PRINTS" id="PR01243">
    <property type="entry name" value="NUCDPKINASE"/>
</dbReference>
<dbReference type="SMART" id="SM00562">
    <property type="entry name" value="NDK"/>
    <property type="match status" value="1"/>
</dbReference>
<dbReference type="SUPFAM" id="SSF54919">
    <property type="entry name" value="Nucleoside diphosphate kinase, NDK"/>
    <property type="match status" value="1"/>
</dbReference>
<dbReference type="PROSITE" id="PS00469">
    <property type="entry name" value="NDPK"/>
    <property type="match status" value="1"/>
</dbReference>
<dbReference type="PROSITE" id="PS51374">
    <property type="entry name" value="NDPK_LIKE"/>
    <property type="match status" value="1"/>
</dbReference>
<accession>Q14J74</accession>
<comment type="function">
    <text evidence="1">Major role in the synthesis of nucleoside triphosphates other than ATP. The ATP gamma phosphate is transferred to the NDP beta phosphate via a ping-pong mechanism, using a phosphorylated active-site intermediate.</text>
</comment>
<comment type="catalytic activity">
    <reaction evidence="1">
        <text>a 2'-deoxyribonucleoside 5'-diphosphate + ATP = a 2'-deoxyribonucleoside 5'-triphosphate + ADP</text>
        <dbReference type="Rhea" id="RHEA:44640"/>
        <dbReference type="ChEBI" id="CHEBI:30616"/>
        <dbReference type="ChEBI" id="CHEBI:61560"/>
        <dbReference type="ChEBI" id="CHEBI:73316"/>
        <dbReference type="ChEBI" id="CHEBI:456216"/>
        <dbReference type="EC" id="2.7.4.6"/>
    </reaction>
</comment>
<comment type="catalytic activity">
    <reaction evidence="1">
        <text>a ribonucleoside 5'-diphosphate + ATP = a ribonucleoside 5'-triphosphate + ADP</text>
        <dbReference type="Rhea" id="RHEA:18113"/>
        <dbReference type="ChEBI" id="CHEBI:30616"/>
        <dbReference type="ChEBI" id="CHEBI:57930"/>
        <dbReference type="ChEBI" id="CHEBI:61557"/>
        <dbReference type="ChEBI" id="CHEBI:456216"/>
        <dbReference type="EC" id="2.7.4.6"/>
    </reaction>
</comment>
<comment type="cofactor">
    <cofactor evidence="1">
        <name>Mg(2+)</name>
        <dbReference type="ChEBI" id="CHEBI:18420"/>
    </cofactor>
</comment>
<comment type="subunit">
    <text evidence="1">Homotetramer.</text>
</comment>
<comment type="subcellular location">
    <subcellularLocation>
        <location evidence="1">Cytoplasm</location>
    </subcellularLocation>
</comment>
<comment type="similarity">
    <text evidence="1">Belongs to the NDK family.</text>
</comment>
<protein>
    <recommendedName>
        <fullName evidence="1">Nucleoside diphosphate kinase</fullName>
        <shortName evidence="1">NDK</shortName>
        <shortName evidence="1">NDP kinase</shortName>
        <ecNumber evidence="1">2.7.4.6</ecNumber>
    </recommendedName>
    <alternativeName>
        <fullName evidence="1">Nucleoside-2-P kinase</fullName>
    </alternativeName>
</protein>
<organism>
    <name type="scientific">Francisella tularensis subsp. tularensis (strain FSC 198)</name>
    <dbReference type="NCBI Taxonomy" id="393115"/>
    <lineage>
        <taxon>Bacteria</taxon>
        <taxon>Pseudomonadati</taxon>
        <taxon>Pseudomonadota</taxon>
        <taxon>Gammaproteobacteria</taxon>
        <taxon>Thiotrichales</taxon>
        <taxon>Francisellaceae</taxon>
        <taxon>Francisella</taxon>
    </lineage>
</organism>